<reference key="1">
    <citation type="journal article" date="1989" name="Mol. Gen. Genet.">
        <title>Cloning and molecular characterization of the gene rimL which encodes an enzyme acetylating ribosomal protein L12 of Escherichia coli K12.</title>
        <authorList>
            <person name="Tanaka S."/>
            <person name="Matsushita Y."/>
            <person name="Yoshikawa A."/>
            <person name="Isono K."/>
        </authorList>
    </citation>
    <scope>NUCLEOTIDE SEQUENCE [GENOMIC DNA]</scope>
    <scope>FUNCTION</scope>
    <scope>DISRUPTION PHENOTYPE</scope>
    <source>
        <strain>MB2052</strain>
    </source>
</reference>
<reference key="2">
    <citation type="journal article" date="1996" name="DNA Res.">
        <title>A 570-kb DNA sequence of the Escherichia coli K-12 genome corresponding to the 28.0-40.1 min region on the linkage map.</title>
        <authorList>
            <person name="Aiba H."/>
            <person name="Baba T."/>
            <person name="Fujita K."/>
            <person name="Hayashi K."/>
            <person name="Inada T."/>
            <person name="Isono K."/>
            <person name="Itoh T."/>
            <person name="Kasai H."/>
            <person name="Kashimoto K."/>
            <person name="Kimura S."/>
            <person name="Kitakawa M."/>
            <person name="Kitagawa M."/>
            <person name="Makino K."/>
            <person name="Miki T."/>
            <person name="Mizobuchi K."/>
            <person name="Mori H."/>
            <person name="Mori T."/>
            <person name="Motomura K."/>
            <person name="Nakade S."/>
            <person name="Nakamura Y."/>
            <person name="Nashimoto H."/>
            <person name="Nishio Y."/>
            <person name="Oshima T."/>
            <person name="Saito N."/>
            <person name="Sampei G."/>
            <person name="Seki Y."/>
            <person name="Sivasundaram S."/>
            <person name="Tagami H."/>
            <person name="Takeda J."/>
            <person name="Takemoto K."/>
            <person name="Takeuchi Y."/>
            <person name="Wada C."/>
            <person name="Yamamoto Y."/>
            <person name="Horiuchi T."/>
        </authorList>
    </citation>
    <scope>NUCLEOTIDE SEQUENCE [LARGE SCALE GENOMIC DNA]</scope>
    <source>
        <strain>K12 / W3110 / ATCC 27325 / DSM 5911</strain>
    </source>
</reference>
<reference key="3">
    <citation type="journal article" date="1997" name="Science">
        <title>The complete genome sequence of Escherichia coli K-12.</title>
        <authorList>
            <person name="Blattner F.R."/>
            <person name="Plunkett G. III"/>
            <person name="Bloch C.A."/>
            <person name="Perna N.T."/>
            <person name="Burland V."/>
            <person name="Riley M."/>
            <person name="Collado-Vides J."/>
            <person name="Glasner J.D."/>
            <person name="Rode C.K."/>
            <person name="Mayhew G.F."/>
            <person name="Gregor J."/>
            <person name="Davis N.W."/>
            <person name="Kirkpatrick H.A."/>
            <person name="Goeden M.A."/>
            <person name="Rose D.J."/>
            <person name="Mau B."/>
            <person name="Shao Y."/>
        </authorList>
    </citation>
    <scope>NUCLEOTIDE SEQUENCE [LARGE SCALE GENOMIC DNA]</scope>
    <source>
        <strain>K12 / MG1655 / ATCC 47076</strain>
    </source>
</reference>
<reference key="4">
    <citation type="journal article" date="2006" name="Mol. Syst. Biol.">
        <title>Highly accurate genome sequences of Escherichia coli K-12 strains MG1655 and W3110.</title>
        <authorList>
            <person name="Hayashi K."/>
            <person name="Morooka N."/>
            <person name="Yamamoto Y."/>
            <person name="Fujita K."/>
            <person name="Isono K."/>
            <person name="Choi S."/>
            <person name="Ohtsubo E."/>
            <person name="Baba T."/>
            <person name="Wanner B.L."/>
            <person name="Mori H."/>
            <person name="Horiuchi T."/>
        </authorList>
    </citation>
    <scope>NUCLEOTIDE SEQUENCE [LARGE SCALE GENOMIC DNA]</scope>
    <source>
        <strain>K12 / W3110 / ATCC 27325 / DSM 5911</strain>
    </source>
</reference>
<reference key="5">
    <citation type="journal article" date="1997" name="Electrophoresis">
        <title>Escherichia coli proteome analysis using the gene-protein database.</title>
        <authorList>
            <person name="VanBogelen R.A."/>
            <person name="Abshire K.Z."/>
            <person name="Moldover B."/>
            <person name="Olson E.R."/>
            <person name="Neidhardt F.C."/>
        </authorList>
    </citation>
    <scope>IDENTIFICATION BY 2D-GEL</scope>
</reference>
<protein>
    <recommendedName>
        <fullName>Ribosomal-protein-serine acetyltransferase</fullName>
        <ecNumber>2.3.1.-</ecNumber>
    </recommendedName>
    <alternativeName>
        <fullName>Acetylating enzyme for N-terminus of ribosomal protein L7/L12</fullName>
    </alternativeName>
</protein>
<sequence>MTETIKVSESLELHAVAENHVKPLYQLICKNKTWLQQSLNWPQFVQSEEDTRKTVQGNVMLHQRGYAKMFMIFKEDELIGVISFNRIEPLNKTAEIGYWLDESHQGQGIISQALQALIHHYAQSGELRRFVIKCRVDNPQSNQVALRNGFILEGCLKQAEFLNDAYDDVNLYARIIDSQ</sequence>
<dbReference type="EC" id="2.3.1.-"/>
<dbReference type="EMBL" id="X15860">
    <property type="protein sequence ID" value="CAA33869.1"/>
    <property type="molecule type" value="Genomic_DNA"/>
</dbReference>
<dbReference type="EMBL" id="U00096">
    <property type="protein sequence ID" value="AAC74509.1"/>
    <property type="molecule type" value="Genomic_DNA"/>
</dbReference>
<dbReference type="EMBL" id="AP009048">
    <property type="protein sequence ID" value="BAA15048.1"/>
    <property type="molecule type" value="Genomic_DNA"/>
</dbReference>
<dbReference type="PIR" id="S04776">
    <property type="entry name" value="XXECPL"/>
</dbReference>
<dbReference type="RefSeq" id="NP_415944.1">
    <property type="nucleotide sequence ID" value="NC_000913.3"/>
</dbReference>
<dbReference type="RefSeq" id="WP_000140873.1">
    <property type="nucleotide sequence ID" value="NZ_SSZK01000021.1"/>
</dbReference>
<dbReference type="SMR" id="P13857"/>
<dbReference type="BioGRID" id="4260179">
    <property type="interactions" value="52"/>
</dbReference>
<dbReference type="FunCoup" id="P13857">
    <property type="interactions" value="18"/>
</dbReference>
<dbReference type="IntAct" id="P13857">
    <property type="interactions" value="2"/>
</dbReference>
<dbReference type="STRING" id="511145.b1427"/>
<dbReference type="jPOST" id="P13857"/>
<dbReference type="PaxDb" id="511145-b1427"/>
<dbReference type="EnsemblBacteria" id="AAC74509">
    <property type="protein sequence ID" value="AAC74509"/>
    <property type="gene ID" value="b1427"/>
</dbReference>
<dbReference type="GeneID" id="945998"/>
<dbReference type="KEGG" id="ecj:JW1423"/>
<dbReference type="KEGG" id="eco:b1427"/>
<dbReference type="KEGG" id="ecoc:C3026_08305"/>
<dbReference type="PATRIC" id="fig|1411691.4.peg.844"/>
<dbReference type="EchoBASE" id="EB0846"/>
<dbReference type="eggNOG" id="COG1670">
    <property type="taxonomic scope" value="Bacteria"/>
</dbReference>
<dbReference type="HOGENOM" id="CLU_013985_3_0_6"/>
<dbReference type="InParanoid" id="P13857"/>
<dbReference type="OMA" id="SQWLAWP"/>
<dbReference type="OrthoDB" id="9784707at2"/>
<dbReference type="PhylomeDB" id="P13857"/>
<dbReference type="BioCyc" id="EcoCyc:EG10853-MONOMER"/>
<dbReference type="BioCyc" id="MetaCyc:EG10853-MONOMER"/>
<dbReference type="PRO" id="PR:P13857"/>
<dbReference type="Proteomes" id="UP000000625">
    <property type="component" value="Chromosome"/>
</dbReference>
<dbReference type="GO" id="GO:0005737">
    <property type="term" value="C:cytoplasm"/>
    <property type="evidence" value="ECO:0000314"/>
    <property type="project" value="EcoliWiki"/>
</dbReference>
<dbReference type="GO" id="GO:0008080">
    <property type="term" value="F:N-acetyltransferase activity"/>
    <property type="evidence" value="ECO:0000314"/>
    <property type="project" value="EcoliWiki"/>
</dbReference>
<dbReference type="GO" id="GO:1990189">
    <property type="term" value="F:protein N-terminal-serine acetyltransferase activity"/>
    <property type="evidence" value="ECO:0000314"/>
    <property type="project" value="EcoCyc"/>
</dbReference>
<dbReference type="GO" id="GO:0004596">
    <property type="term" value="F:protein-N-terminal amino-acid acetyltransferase activity"/>
    <property type="evidence" value="ECO:0000314"/>
    <property type="project" value="EcoCyc"/>
</dbReference>
<dbReference type="GO" id="GO:0008999">
    <property type="term" value="F:protein-N-terminal-alanine acetyltransferase activity"/>
    <property type="evidence" value="ECO:0000314"/>
    <property type="project" value="EcoliWiki"/>
</dbReference>
<dbReference type="GO" id="GO:0036211">
    <property type="term" value="P:protein modification process"/>
    <property type="evidence" value="ECO:0000314"/>
    <property type="project" value="EcoliWiki"/>
</dbReference>
<dbReference type="CDD" id="cd04301">
    <property type="entry name" value="NAT_SF"/>
    <property type="match status" value="1"/>
</dbReference>
<dbReference type="FunFam" id="3.40.630.30:FF:000052">
    <property type="entry name" value="Ribosomal-protein-serine acetyltransferase RimL"/>
    <property type="match status" value="1"/>
</dbReference>
<dbReference type="Gene3D" id="3.40.630.30">
    <property type="match status" value="1"/>
</dbReference>
<dbReference type="InterPro" id="IPR016181">
    <property type="entry name" value="Acyl_CoA_acyltransferase"/>
</dbReference>
<dbReference type="InterPro" id="IPR000182">
    <property type="entry name" value="GNAT_dom"/>
</dbReference>
<dbReference type="InterPro" id="IPR051908">
    <property type="entry name" value="Ribosomal_N-acetyltransferase"/>
</dbReference>
<dbReference type="NCBIfam" id="NF007539">
    <property type="entry name" value="PRK10151.1"/>
    <property type="match status" value="1"/>
</dbReference>
<dbReference type="PANTHER" id="PTHR43441">
    <property type="entry name" value="RIBOSOMAL-PROTEIN-SERINE ACETYLTRANSFERASE"/>
    <property type="match status" value="1"/>
</dbReference>
<dbReference type="PANTHER" id="PTHR43441:SF11">
    <property type="entry name" value="RIBOSOMAL-PROTEIN-SERINE ACETYLTRANSFERASE"/>
    <property type="match status" value="1"/>
</dbReference>
<dbReference type="Pfam" id="PF13302">
    <property type="entry name" value="Acetyltransf_3"/>
    <property type="match status" value="1"/>
</dbReference>
<dbReference type="SUPFAM" id="SSF55729">
    <property type="entry name" value="Acyl-CoA N-acyltransferases (Nat)"/>
    <property type="match status" value="1"/>
</dbReference>
<dbReference type="PROSITE" id="PS51186">
    <property type="entry name" value="GNAT"/>
    <property type="match status" value="1"/>
</dbReference>
<name>RIML_ECOLI</name>
<feature type="chain" id="PRO_0000074570" description="Ribosomal-protein-serine acetyltransferase">
    <location>
        <begin position="1"/>
        <end position="179"/>
    </location>
</feature>
<feature type="domain" description="N-acetyltransferase" evidence="1">
    <location>
        <begin position="11"/>
        <end position="172"/>
    </location>
</feature>
<keyword id="KW-0012">Acyltransferase</keyword>
<keyword id="KW-0963">Cytoplasm</keyword>
<keyword id="KW-1185">Reference proteome</keyword>
<keyword id="KW-0808">Transferase</keyword>
<comment type="function">
    <text evidence="2">This enzyme acetylates the N-terminal serine of ribosomal protein bL12, converting it into the acetylated form of bL12 known as bL7.</text>
</comment>
<comment type="catalytic activity">
    <reaction>
        <text>N-terminal L-seryl-[ribosomal protein bL12] + acetyl-CoA = N-terminal N(alpha)-acetyl-L-seryl-[ribosomal protein bL12] + CoA + H(+)</text>
        <dbReference type="Rhea" id="RHEA:43760"/>
        <dbReference type="Rhea" id="RHEA-COMP:10681"/>
        <dbReference type="Rhea" id="RHEA-COMP:10682"/>
        <dbReference type="ChEBI" id="CHEBI:15378"/>
        <dbReference type="ChEBI" id="CHEBI:57287"/>
        <dbReference type="ChEBI" id="CHEBI:57288"/>
        <dbReference type="ChEBI" id="CHEBI:64738"/>
        <dbReference type="ChEBI" id="CHEBI:83690"/>
    </reaction>
</comment>
<comment type="subcellular location">
    <subcellularLocation>
        <location>Cytoplasm</location>
    </subcellularLocation>
</comment>
<comment type="disruption phenotype">
    <text evidence="2">No longer acetylates bL12.</text>
</comment>
<comment type="similarity">
    <text evidence="4">Belongs to the acetyltransferase family. RimL subfamily.</text>
</comment>
<proteinExistence type="evidence at protein level"/>
<organism>
    <name type="scientific">Escherichia coli (strain K12)</name>
    <dbReference type="NCBI Taxonomy" id="83333"/>
    <lineage>
        <taxon>Bacteria</taxon>
        <taxon>Pseudomonadati</taxon>
        <taxon>Pseudomonadota</taxon>
        <taxon>Gammaproteobacteria</taxon>
        <taxon>Enterobacterales</taxon>
        <taxon>Enterobacteriaceae</taxon>
        <taxon>Escherichia</taxon>
    </lineage>
</organism>
<evidence type="ECO:0000255" key="1">
    <source>
        <dbReference type="PROSITE-ProRule" id="PRU00532"/>
    </source>
</evidence>
<evidence type="ECO:0000269" key="2">
    <source>
    </source>
</evidence>
<evidence type="ECO:0000303" key="3">
    <source>
    </source>
</evidence>
<evidence type="ECO:0000305" key="4"/>
<gene>
    <name evidence="3" type="primary">rimL</name>
    <name type="ordered locus">b1427</name>
    <name type="ordered locus">JW1423</name>
</gene>
<accession>P13857</accession>